<feature type="chain" id="PRO_0000178868" description="UDP-N-acetylglucosamine 1-carboxyvinyltransferase">
    <location>
        <begin position="1"/>
        <end position="426"/>
    </location>
</feature>
<feature type="active site" description="Proton donor" evidence="1">
    <location>
        <position position="119"/>
    </location>
</feature>
<feature type="binding site" evidence="1">
    <location>
        <begin position="24"/>
        <end position="25"/>
    </location>
    <ligand>
        <name>phosphoenolpyruvate</name>
        <dbReference type="ChEBI" id="CHEBI:58702"/>
    </ligand>
</feature>
<feature type="binding site" evidence="1">
    <location>
        <position position="95"/>
    </location>
    <ligand>
        <name>UDP-N-acetyl-alpha-D-glucosamine</name>
        <dbReference type="ChEBI" id="CHEBI:57705"/>
    </ligand>
</feature>
<feature type="binding site" evidence="1">
    <location>
        <begin position="124"/>
        <end position="128"/>
    </location>
    <ligand>
        <name>UDP-N-acetyl-alpha-D-glucosamine</name>
        <dbReference type="ChEBI" id="CHEBI:57705"/>
    </ligand>
</feature>
<feature type="binding site" evidence="1">
    <location>
        <position position="308"/>
    </location>
    <ligand>
        <name>UDP-N-acetyl-alpha-D-glucosamine</name>
        <dbReference type="ChEBI" id="CHEBI:57705"/>
    </ligand>
</feature>
<feature type="binding site" evidence="1">
    <location>
        <position position="330"/>
    </location>
    <ligand>
        <name>UDP-N-acetyl-alpha-D-glucosamine</name>
        <dbReference type="ChEBI" id="CHEBI:57705"/>
    </ligand>
</feature>
<feature type="modified residue" description="2-(S-cysteinyl)pyruvic acid O-phosphothioketal" evidence="1">
    <location>
        <position position="119"/>
    </location>
</feature>
<protein>
    <recommendedName>
        <fullName evidence="1">UDP-N-acetylglucosamine 1-carboxyvinyltransferase</fullName>
        <ecNumber evidence="1">2.5.1.7</ecNumber>
    </recommendedName>
    <alternativeName>
        <fullName evidence="1">Enoylpyruvate transferase</fullName>
    </alternativeName>
    <alternativeName>
        <fullName evidence="1">UDP-N-acetylglucosamine enolpyruvyl transferase</fullName>
        <shortName evidence="1">EPT</shortName>
    </alternativeName>
</protein>
<accession>Q9RVA6</accession>
<dbReference type="EC" id="2.5.1.7" evidence="1"/>
<dbReference type="EMBL" id="AE000513">
    <property type="protein sequence ID" value="AAF10696.1"/>
    <property type="molecule type" value="Genomic_DNA"/>
</dbReference>
<dbReference type="PIR" id="B75434">
    <property type="entry name" value="B75434"/>
</dbReference>
<dbReference type="RefSeq" id="NP_294847.1">
    <property type="nucleotide sequence ID" value="NC_001263.1"/>
</dbReference>
<dbReference type="RefSeq" id="WP_010887766.1">
    <property type="nucleotide sequence ID" value="NC_001263.1"/>
</dbReference>
<dbReference type="SMR" id="Q9RVA6"/>
<dbReference type="FunCoup" id="Q9RVA6">
    <property type="interactions" value="339"/>
</dbReference>
<dbReference type="STRING" id="243230.DR_1123"/>
<dbReference type="PaxDb" id="243230-DR_1123"/>
<dbReference type="EnsemblBacteria" id="AAF10696">
    <property type="protein sequence ID" value="AAF10696"/>
    <property type="gene ID" value="DR_1123"/>
</dbReference>
<dbReference type="GeneID" id="69517370"/>
<dbReference type="KEGG" id="dra:DR_1123"/>
<dbReference type="PATRIC" id="fig|243230.17.peg.1319"/>
<dbReference type="eggNOG" id="COG0766">
    <property type="taxonomic scope" value="Bacteria"/>
</dbReference>
<dbReference type="HOGENOM" id="CLU_027387_0_0_0"/>
<dbReference type="InParanoid" id="Q9RVA6"/>
<dbReference type="OrthoDB" id="9803760at2"/>
<dbReference type="UniPathway" id="UPA00219"/>
<dbReference type="Proteomes" id="UP000002524">
    <property type="component" value="Chromosome 1"/>
</dbReference>
<dbReference type="GO" id="GO:0005737">
    <property type="term" value="C:cytoplasm"/>
    <property type="evidence" value="ECO:0007669"/>
    <property type="project" value="UniProtKB-SubCell"/>
</dbReference>
<dbReference type="GO" id="GO:0008760">
    <property type="term" value="F:UDP-N-acetylglucosamine 1-carboxyvinyltransferase activity"/>
    <property type="evidence" value="ECO:0007669"/>
    <property type="project" value="UniProtKB-UniRule"/>
</dbReference>
<dbReference type="GO" id="GO:0051301">
    <property type="term" value="P:cell division"/>
    <property type="evidence" value="ECO:0007669"/>
    <property type="project" value="UniProtKB-KW"/>
</dbReference>
<dbReference type="GO" id="GO:0071555">
    <property type="term" value="P:cell wall organization"/>
    <property type="evidence" value="ECO:0007669"/>
    <property type="project" value="UniProtKB-KW"/>
</dbReference>
<dbReference type="GO" id="GO:0009252">
    <property type="term" value="P:peptidoglycan biosynthetic process"/>
    <property type="evidence" value="ECO:0007669"/>
    <property type="project" value="UniProtKB-UniRule"/>
</dbReference>
<dbReference type="GO" id="GO:0008360">
    <property type="term" value="P:regulation of cell shape"/>
    <property type="evidence" value="ECO:0007669"/>
    <property type="project" value="UniProtKB-KW"/>
</dbReference>
<dbReference type="GO" id="GO:0019277">
    <property type="term" value="P:UDP-N-acetylgalactosamine biosynthetic process"/>
    <property type="evidence" value="ECO:0007669"/>
    <property type="project" value="InterPro"/>
</dbReference>
<dbReference type="CDD" id="cd01555">
    <property type="entry name" value="UdpNAET"/>
    <property type="match status" value="1"/>
</dbReference>
<dbReference type="Gene3D" id="3.65.10.10">
    <property type="entry name" value="Enolpyruvate transferase domain"/>
    <property type="match status" value="2"/>
</dbReference>
<dbReference type="HAMAP" id="MF_00111">
    <property type="entry name" value="MurA"/>
    <property type="match status" value="1"/>
</dbReference>
<dbReference type="InterPro" id="IPR001986">
    <property type="entry name" value="Enolpyruvate_Tfrase_dom"/>
</dbReference>
<dbReference type="InterPro" id="IPR036968">
    <property type="entry name" value="Enolpyruvate_Tfrase_sf"/>
</dbReference>
<dbReference type="InterPro" id="IPR050068">
    <property type="entry name" value="MurA_subfamily"/>
</dbReference>
<dbReference type="InterPro" id="IPR013792">
    <property type="entry name" value="RNA3'P_cycl/enolpyr_Trfase_a/b"/>
</dbReference>
<dbReference type="InterPro" id="IPR005750">
    <property type="entry name" value="UDP_GlcNAc_COvinyl_MurA"/>
</dbReference>
<dbReference type="NCBIfam" id="TIGR01072">
    <property type="entry name" value="murA"/>
    <property type="match status" value="1"/>
</dbReference>
<dbReference type="NCBIfam" id="NF006873">
    <property type="entry name" value="PRK09369.1"/>
    <property type="match status" value="1"/>
</dbReference>
<dbReference type="PANTHER" id="PTHR43783">
    <property type="entry name" value="UDP-N-ACETYLGLUCOSAMINE 1-CARBOXYVINYLTRANSFERASE"/>
    <property type="match status" value="1"/>
</dbReference>
<dbReference type="PANTHER" id="PTHR43783:SF1">
    <property type="entry name" value="UDP-N-ACETYLGLUCOSAMINE 1-CARBOXYVINYLTRANSFERASE"/>
    <property type="match status" value="1"/>
</dbReference>
<dbReference type="Pfam" id="PF00275">
    <property type="entry name" value="EPSP_synthase"/>
    <property type="match status" value="1"/>
</dbReference>
<dbReference type="SUPFAM" id="SSF55205">
    <property type="entry name" value="EPT/RTPC-like"/>
    <property type="match status" value="1"/>
</dbReference>
<name>MURA_DEIRA</name>
<gene>
    <name evidence="1" type="primary">murA</name>
    <name type="ordered locus">DR_1123</name>
</gene>
<organism>
    <name type="scientific">Deinococcus radiodurans (strain ATCC 13939 / DSM 20539 / JCM 16871 / CCUG 27074 / LMG 4051 / NBRC 15346 / NCIMB 9279 / VKM B-1422 / R1)</name>
    <dbReference type="NCBI Taxonomy" id="243230"/>
    <lineage>
        <taxon>Bacteria</taxon>
        <taxon>Thermotogati</taxon>
        <taxon>Deinococcota</taxon>
        <taxon>Deinococci</taxon>
        <taxon>Deinococcales</taxon>
        <taxon>Deinococcaceae</taxon>
        <taxon>Deinococcus</taxon>
    </lineage>
</organism>
<evidence type="ECO:0000255" key="1">
    <source>
        <dbReference type="HAMAP-Rule" id="MF_00111"/>
    </source>
</evidence>
<sequence>MQLTPLHVTGGRQLGGEIAVQHSKNAALPIIVATLLSSEPITLHGIPRLSDVYTILELMHHLGTRHAWVGPNSLTLHTPEIENTDAPYALVSKMRASFIVLGAILARAGTATVSMPGGCAWGPRPVDQHVKALRALGAEVIEDGGNFFAHREGSLNGSFVFELLTVGGTHNAILAAALGEGTVTLENASIDTDVVDVIEFLNALGARIEGAGTNTITIHGVKELHGGEYTVIPDRIEAGTFMMLAAATRSRLTLTNVRPDHLRAVTSKLAEMGVDIQEDGNRMVVDARGRDLKPVNVTTQSYPGFPTDLQPQMSALLATVPGTSVIQDPVYPDRLTHVAELHRMGATITVSGYTQVIQGGTLHAAPVKAADLRAGAALFIAGLTCEGETVIDGVQYLNRGYERLAERLRGIGGEVMQPEPMLAADD</sequence>
<keyword id="KW-0131">Cell cycle</keyword>
<keyword id="KW-0132">Cell division</keyword>
<keyword id="KW-0133">Cell shape</keyword>
<keyword id="KW-0961">Cell wall biogenesis/degradation</keyword>
<keyword id="KW-0963">Cytoplasm</keyword>
<keyword id="KW-0573">Peptidoglycan synthesis</keyword>
<keyword id="KW-0670">Pyruvate</keyword>
<keyword id="KW-1185">Reference proteome</keyword>
<keyword id="KW-0808">Transferase</keyword>
<proteinExistence type="inferred from homology"/>
<comment type="function">
    <text evidence="1">Cell wall formation. Adds enolpyruvyl to UDP-N-acetylglucosamine.</text>
</comment>
<comment type="catalytic activity">
    <reaction evidence="1">
        <text>phosphoenolpyruvate + UDP-N-acetyl-alpha-D-glucosamine = UDP-N-acetyl-3-O-(1-carboxyvinyl)-alpha-D-glucosamine + phosphate</text>
        <dbReference type="Rhea" id="RHEA:18681"/>
        <dbReference type="ChEBI" id="CHEBI:43474"/>
        <dbReference type="ChEBI" id="CHEBI:57705"/>
        <dbReference type="ChEBI" id="CHEBI:58702"/>
        <dbReference type="ChEBI" id="CHEBI:68483"/>
        <dbReference type="EC" id="2.5.1.7"/>
    </reaction>
</comment>
<comment type="pathway">
    <text evidence="1">Cell wall biogenesis; peptidoglycan biosynthesis.</text>
</comment>
<comment type="subcellular location">
    <subcellularLocation>
        <location evidence="1">Cytoplasm</location>
    </subcellularLocation>
</comment>
<comment type="similarity">
    <text evidence="1">Belongs to the EPSP synthase family. MurA subfamily.</text>
</comment>
<reference key="1">
    <citation type="journal article" date="1999" name="Science">
        <title>Genome sequence of the radioresistant bacterium Deinococcus radiodurans R1.</title>
        <authorList>
            <person name="White O."/>
            <person name="Eisen J.A."/>
            <person name="Heidelberg J.F."/>
            <person name="Hickey E.K."/>
            <person name="Peterson J.D."/>
            <person name="Dodson R.J."/>
            <person name="Haft D.H."/>
            <person name="Gwinn M.L."/>
            <person name="Nelson W.C."/>
            <person name="Richardson D.L."/>
            <person name="Moffat K.S."/>
            <person name="Qin H."/>
            <person name="Jiang L."/>
            <person name="Pamphile W."/>
            <person name="Crosby M."/>
            <person name="Shen M."/>
            <person name="Vamathevan J.J."/>
            <person name="Lam P."/>
            <person name="McDonald L.A."/>
            <person name="Utterback T.R."/>
            <person name="Zalewski C."/>
            <person name="Makarova K.S."/>
            <person name="Aravind L."/>
            <person name="Daly M.J."/>
            <person name="Minton K.W."/>
            <person name="Fleischmann R.D."/>
            <person name="Ketchum K.A."/>
            <person name="Nelson K.E."/>
            <person name="Salzberg S.L."/>
            <person name="Smith H.O."/>
            <person name="Venter J.C."/>
            <person name="Fraser C.M."/>
        </authorList>
    </citation>
    <scope>NUCLEOTIDE SEQUENCE [LARGE SCALE GENOMIC DNA]</scope>
    <source>
        <strain>ATCC 13939 / DSM 20539 / JCM 16871 / CCUG 27074 / LMG 4051 / NBRC 15346 / NCIMB 9279 / VKM B-1422 / R1</strain>
    </source>
</reference>